<dbReference type="EMBL" id="CU329671">
    <property type="protein sequence ID" value="CAA21798.1"/>
    <property type="molecule type" value="Genomic_DNA"/>
</dbReference>
<dbReference type="PIR" id="T40807">
    <property type="entry name" value="T40807"/>
</dbReference>
<dbReference type="RefSeq" id="NP_596520.1">
    <property type="nucleotide sequence ID" value="NM_001022441.2"/>
</dbReference>
<dbReference type="SMR" id="O94262"/>
<dbReference type="BioGRID" id="277878">
    <property type="interactions" value="21"/>
</dbReference>
<dbReference type="STRING" id="284812.O94262"/>
<dbReference type="GlyCosmos" id="O94262">
    <property type="glycosylation" value="1 site, No reported glycans"/>
</dbReference>
<dbReference type="iPTMnet" id="O94262"/>
<dbReference type="PaxDb" id="4896-SPBP8B7.13.1"/>
<dbReference type="EnsemblFungi" id="SPBP8B7.13.1">
    <property type="protein sequence ID" value="SPBP8B7.13.1:pep"/>
    <property type="gene ID" value="SPBP8B7.13"/>
</dbReference>
<dbReference type="GeneID" id="2541367"/>
<dbReference type="KEGG" id="spo:2541367"/>
<dbReference type="PomBase" id="SPBP8B7.13">
    <property type="gene designation" value="vac7"/>
</dbReference>
<dbReference type="VEuPathDB" id="FungiDB:SPBP8B7.13"/>
<dbReference type="HOGENOM" id="CLU_1107661_0_0_1"/>
<dbReference type="InParanoid" id="O94262"/>
<dbReference type="OMA" id="KPMQMSV"/>
<dbReference type="PRO" id="PR:O94262"/>
<dbReference type="Proteomes" id="UP000002485">
    <property type="component" value="Chromosome II"/>
</dbReference>
<dbReference type="GO" id="GO:0005783">
    <property type="term" value="C:endoplasmic reticulum"/>
    <property type="evidence" value="ECO:0007005"/>
    <property type="project" value="PomBase"/>
</dbReference>
<dbReference type="GO" id="GO:0005789">
    <property type="term" value="C:endoplasmic reticulum membrane"/>
    <property type="evidence" value="ECO:0007669"/>
    <property type="project" value="UniProtKB-SubCell"/>
</dbReference>
<dbReference type="GO" id="GO:0000329">
    <property type="term" value="C:fungal-type vacuole membrane"/>
    <property type="evidence" value="ECO:0000305"/>
    <property type="project" value="PomBase"/>
</dbReference>
<dbReference type="GO" id="GO:0005794">
    <property type="term" value="C:Golgi apparatus"/>
    <property type="evidence" value="ECO:0007005"/>
    <property type="project" value="PomBase"/>
</dbReference>
<dbReference type="GO" id="GO:0000139">
    <property type="term" value="C:Golgi membrane"/>
    <property type="evidence" value="ECO:0007669"/>
    <property type="project" value="UniProtKB-SubCell"/>
</dbReference>
<dbReference type="GO" id="GO:0070772">
    <property type="term" value="C:PAS complex"/>
    <property type="evidence" value="ECO:0000266"/>
    <property type="project" value="PomBase"/>
</dbReference>
<dbReference type="GO" id="GO:0046488">
    <property type="term" value="P:phosphatidylinositol metabolic process"/>
    <property type="evidence" value="ECO:0000266"/>
    <property type="project" value="PomBase"/>
</dbReference>
<dbReference type="InterPro" id="IPR024260">
    <property type="entry name" value="Vac7"/>
</dbReference>
<dbReference type="Pfam" id="PF12751">
    <property type="entry name" value="Vac7"/>
    <property type="match status" value="1"/>
</dbReference>
<gene>
    <name type="primary">vac7</name>
    <name type="ORF">SPBP8B7.13</name>
</gene>
<keyword id="KW-0256">Endoplasmic reticulum</keyword>
<keyword id="KW-0325">Glycoprotein</keyword>
<keyword id="KW-0333">Golgi apparatus</keyword>
<keyword id="KW-0472">Membrane</keyword>
<keyword id="KW-1185">Reference proteome</keyword>
<keyword id="KW-0735">Signal-anchor</keyword>
<keyword id="KW-0812">Transmembrane</keyword>
<keyword id="KW-1133">Transmembrane helix</keyword>
<keyword id="KW-0926">Vacuole</keyword>
<evidence type="ECO:0000250" key="1"/>
<evidence type="ECO:0000255" key="2"/>
<evidence type="ECO:0000256" key="3">
    <source>
        <dbReference type="SAM" id="MobiDB-lite"/>
    </source>
</evidence>
<evidence type="ECO:0000269" key="4">
    <source>
    </source>
</evidence>
<reference key="1">
    <citation type="journal article" date="2002" name="Nature">
        <title>The genome sequence of Schizosaccharomyces pombe.</title>
        <authorList>
            <person name="Wood V."/>
            <person name="Gwilliam R."/>
            <person name="Rajandream M.A."/>
            <person name="Lyne M.H."/>
            <person name="Lyne R."/>
            <person name="Stewart A."/>
            <person name="Sgouros J.G."/>
            <person name="Peat N."/>
            <person name="Hayles J."/>
            <person name="Baker S.G."/>
            <person name="Basham D."/>
            <person name="Bowman S."/>
            <person name="Brooks K."/>
            <person name="Brown D."/>
            <person name="Brown S."/>
            <person name="Chillingworth T."/>
            <person name="Churcher C.M."/>
            <person name="Collins M."/>
            <person name="Connor R."/>
            <person name="Cronin A."/>
            <person name="Davis P."/>
            <person name="Feltwell T."/>
            <person name="Fraser A."/>
            <person name="Gentles S."/>
            <person name="Goble A."/>
            <person name="Hamlin N."/>
            <person name="Harris D.E."/>
            <person name="Hidalgo J."/>
            <person name="Hodgson G."/>
            <person name="Holroyd S."/>
            <person name="Hornsby T."/>
            <person name="Howarth S."/>
            <person name="Huckle E.J."/>
            <person name="Hunt S."/>
            <person name="Jagels K."/>
            <person name="James K.D."/>
            <person name="Jones L."/>
            <person name="Jones M."/>
            <person name="Leather S."/>
            <person name="McDonald S."/>
            <person name="McLean J."/>
            <person name="Mooney P."/>
            <person name="Moule S."/>
            <person name="Mungall K.L."/>
            <person name="Murphy L.D."/>
            <person name="Niblett D."/>
            <person name="Odell C."/>
            <person name="Oliver K."/>
            <person name="O'Neil S."/>
            <person name="Pearson D."/>
            <person name="Quail M.A."/>
            <person name="Rabbinowitsch E."/>
            <person name="Rutherford K.M."/>
            <person name="Rutter S."/>
            <person name="Saunders D."/>
            <person name="Seeger K."/>
            <person name="Sharp S."/>
            <person name="Skelton J."/>
            <person name="Simmonds M.N."/>
            <person name="Squares R."/>
            <person name="Squares S."/>
            <person name="Stevens K."/>
            <person name="Taylor K."/>
            <person name="Taylor R.G."/>
            <person name="Tivey A."/>
            <person name="Walsh S.V."/>
            <person name="Warren T."/>
            <person name="Whitehead S."/>
            <person name="Woodward J.R."/>
            <person name="Volckaert G."/>
            <person name="Aert R."/>
            <person name="Robben J."/>
            <person name="Grymonprez B."/>
            <person name="Weltjens I."/>
            <person name="Vanstreels E."/>
            <person name="Rieger M."/>
            <person name="Schaefer M."/>
            <person name="Mueller-Auer S."/>
            <person name="Gabel C."/>
            <person name="Fuchs M."/>
            <person name="Duesterhoeft A."/>
            <person name="Fritzc C."/>
            <person name="Holzer E."/>
            <person name="Moestl D."/>
            <person name="Hilbert H."/>
            <person name="Borzym K."/>
            <person name="Langer I."/>
            <person name="Beck A."/>
            <person name="Lehrach H."/>
            <person name="Reinhardt R."/>
            <person name="Pohl T.M."/>
            <person name="Eger P."/>
            <person name="Zimmermann W."/>
            <person name="Wedler H."/>
            <person name="Wambutt R."/>
            <person name="Purnelle B."/>
            <person name="Goffeau A."/>
            <person name="Cadieu E."/>
            <person name="Dreano S."/>
            <person name="Gloux S."/>
            <person name="Lelaure V."/>
            <person name="Mottier S."/>
            <person name="Galibert F."/>
            <person name="Aves S.J."/>
            <person name="Xiang Z."/>
            <person name="Hunt C."/>
            <person name="Moore K."/>
            <person name="Hurst S.M."/>
            <person name="Lucas M."/>
            <person name="Rochet M."/>
            <person name="Gaillardin C."/>
            <person name="Tallada V.A."/>
            <person name="Garzon A."/>
            <person name="Thode G."/>
            <person name="Daga R.R."/>
            <person name="Cruzado L."/>
            <person name="Jimenez J."/>
            <person name="Sanchez M."/>
            <person name="del Rey F."/>
            <person name="Benito J."/>
            <person name="Dominguez A."/>
            <person name="Revuelta J.L."/>
            <person name="Moreno S."/>
            <person name="Armstrong J."/>
            <person name="Forsburg S.L."/>
            <person name="Cerutti L."/>
            <person name="Lowe T."/>
            <person name="McCombie W.R."/>
            <person name="Paulsen I."/>
            <person name="Potashkin J."/>
            <person name="Shpakovski G.V."/>
            <person name="Ussery D."/>
            <person name="Barrell B.G."/>
            <person name="Nurse P."/>
        </authorList>
    </citation>
    <scope>NUCLEOTIDE SEQUENCE [LARGE SCALE GENOMIC DNA]</scope>
    <source>
        <strain>972 / ATCC 24843</strain>
    </source>
</reference>
<reference key="2">
    <citation type="journal article" date="2006" name="Nat. Biotechnol.">
        <title>ORFeome cloning and global analysis of protein localization in the fission yeast Schizosaccharomyces pombe.</title>
        <authorList>
            <person name="Matsuyama A."/>
            <person name="Arai R."/>
            <person name="Yashiroda Y."/>
            <person name="Shirai A."/>
            <person name="Kamata A."/>
            <person name="Sekido S."/>
            <person name="Kobayashi Y."/>
            <person name="Hashimoto A."/>
            <person name="Hamamoto M."/>
            <person name="Hiraoka Y."/>
            <person name="Horinouchi S."/>
            <person name="Yoshida M."/>
        </authorList>
    </citation>
    <scope>SUBCELLULAR LOCATION [LARGE SCALE ANALYSIS]</scope>
</reference>
<name>VAC7_SCHPO</name>
<comment type="function">
    <text evidence="1">Component of the PI(3,5)P2 regulatory complex that regulates both the synthesis and turnover of phosphatidylinositol 3,5-bisphosphate (PtdIns(3,5)P2). Directly involved in vacuolar membrane scission. Required for normal vacuole acidification, inheritance and morphology (By similarity).</text>
</comment>
<comment type="subunit">
    <text>Component of the PI(3,5)P2 regulatory complex.</text>
</comment>
<comment type="subcellular location">
    <subcellularLocation>
        <location evidence="4">Endoplasmic reticulum membrane</location>
        <topology evidence="4">Single-pass type II membrane protein</topology>
    </subcellularLocation>
    <subcellularLocation>
        <location evidence="4">Golgi apparatus membrane</location>
        <topology evidence="4">Single-pass type II membrane protein</topology>
    </subcellularLocation>
    <subcellularLocation>
        <location evidence="1">Vacuole membrane</location>
        <topology evidence="1">Single-pass type II membrane protein</topology>
    </subcellularLocation>
</comment>
<accession>O94262</accession>
<organism>
    <name type="scientific">Schizosaccharomyces pombe (strain 972 / ATCC 24843)</name>
    <name type="common">Fission yeast</name>
    <dbReference type="NCBI Taxonomy" id="284812"/>
    <lineage>
        <taxon>Eukaryota</taxon>
        <taxon>Fungi</taxon>
        <taxon>Dikarya</taxon>
        <taxon>Ascomycota</taxon>
        <taxon>Taphrinomycotina</taxon>
        <taxon>Schizosaccharomycetes</taxon>
        <taxon>Schizosaccharomycetales</taxon>
        <taxon>Schizosaccharomycetaceae</taxon>
        <taxon>Schizosaccharomyces</taxon>
    </lineage>
</organism>
<sequence length="251" mass="27747">MSEPKPMQMSVETETVLNVSQVQIPSSCDRKASLETLKTKKNAQKKKKISLPNVMTSKAAMFAARVASAVDQDPNDEESENFVYENLIPTNDDELHSPSASIHSFQTYNLPLEMLPTINHVPYYGSAGTNALNGGPLSNSRKLIPKRSAKFSSMVGSSDTRCNSPTTARGLATSPLQINPTTSKSPLLNKKLSSTSQEPFRTSRRSGQESGDVTTKMLRNLLHKRLWISFFFACFVVLSLVYFHYAVQPLL</sequence>
<feature type="chain" id="PRO_0000351433" description="Vacuolar segregation protein 7">
    <location>
        <begin position="1"/>
        <end position="251"/>
    </location>
</feature>
<feature type="transmembrane region" description="Helical; Signal-anchor for type II membrane protein" evidence="2">
    <location>
        <begin position="227"/>
        <end position="247"/>
    </location>
</feature>
<feature type="region of interest" description="Disordered" evidence="3">
    <location>
        <begin position="154"/>
        <end position="212"/>
    </location>
</feature>
<feature type="compositionally biased region" description="Polar residues" evidence="3">
    <location>
        <begin position="154"/>
        <end position="167"/>
    </location>
</feature>
<feature type="compositionally biased region" description="Low complexity" evidence="3">
    <location>
        <begin position="181"/>
        <end position="196"/>
    </location>
</feature>
<feature type="glycosylation site" description="N-linked (GlcNAc...) asparagine" evidence="2">
    <location>
        <position position="18"/>
    </location>
</feature>
<protein>
    <recommendedName>
        <fullName>Vacuolar segregation protein 7</fullName>
    </recommendedName>
</protein>
<proteinExistence type="inferred from homology"/>